<keyword id="KW-1185">Reference proteome</keyword>
<keyword id="KW-0687">Ribonucleoprotein</keyword>
<keyword id="KW-0689">Ribosomal protein</keyword>
<keyword id="KW-0694">RNA-binding</keyword>
<keyword id="KW-0699">rRNA-binding</keyword>
<feature type="chain" id="PRO_1000060513" description="Large ribosomal subunit protein bL9">
    <location>
        <begin position="1"/>
        <end position="151"/>
    </location>
</feature>
<organism>
    <name type="scientific">Pseudothermotoga lettingae (strain ATCC BAA-301 / DSM 14385 / NBRC 107922 / TMO)</name>
    <name type="common">Thermotoga lettingae</name>
    <dbReference type="NCBI Taxonomy" id="416591"/>
    <lineage>
        <taxon>Bacteria</taxon>
        <taxon>Thermotogati</taxon>
        <taxon>Thermotogota</taxon>
        <taxon>Thermotogae</taxon>
        <taxon>Thermotogales</taxon>
        <taxon>Thermotogaceae</taxon>
        <taxon>Pseudothermotoga</taxon>
    </lineage>
</organism>
<name>RL9_PSELT</name>
<comment type="function">
    <text evidence="1">Binds to the 23S rRNA.</text>
</comment>
<comment type="similarity">
    <text evidence="1">Belongs to the bacterial ribosomal protein bL9 family.</text>
</comment>
<reference key="1">
    <citation type="submission" date="2007-08" db="EMBL/GenBank/DDBJ databases">
        <title>Complete sequence of Thermotoga lettingae TMO.</title>
        <authorList>
            <consortium name="US DOE Joint Genome Institute"/>
            <person name="Copeland A."/>
            <person name="Lucas S."/>
            <person name="Lapidus A."/>
            <person name="Barry K."/>
            <person name="Glavina del Rio T."/>
            <person name="Dalin E."/>
            <person name="Tice H."/>
            <person name="Pitluck S."/>
            <person name="Foster B."/>
            <person name="Bruce D."/>
            <person name="Schmutz J."/>
            <person name="Larimer F."/>
            <person name="Land M."/>
            <person name="Hauser L."/>
            <person name="Kyrpides N."/>
            <person name="Mikhailova N."/>
            <person name="Nelson K."/>
            <person name="Gogarten J.P."/>
            <person name="Noll K."/>
            <person name="Richardson P."/>
        </authorList>
    </citation>
    <scope>NUCLEOTIDE SEQUENCE [LARGE SCALE GENOMIC DNA]</scope>
    <source>
        <strain>ATCC BAA-301 / DSM 14385 / NBRC 107922 / TMO</strain>
    </source>
</reference>
<evidence type="ECO:0000255" key="1">
    <source>
        <dbReference type="HAMAP-Rule" id="MF_00503"/>
    </source>
</evidence>
<evidence type="ECO:0000305" key="2"/>
<dbReference type="EMBL" id="CP000812">
    <property type="protein sequence ID" value="ABV34153.1"/>
    <property type="molecule type" value="Genomic_DNA"/>
</dbReference>
<dbReference type="RefSeq" id="WP_012003629.1">
    <property type="nucleotide sequence ID" value="NZ_BSDV01000001.1"/>
</dbReference>
<dbReference type="SMR" id="A8F7L9"/>
<dbReference type="STRING" id="416591.Tlet_1599"/>
<dbReference type="KEGG" id="tle:Tlet_1599"/>
<dbReference type="eggNOG" id="COG0359">
    <property type="taxonomic scope" value="Bacteria"/>
</dbReference>
<dbReference type="HOGENOM" id="CLU_078938_3_0_0"/>
<dbReference type="OrthoDB" id="9788336at2"/>
<dbReference type="Proteomes" id="UP000002016">
    <property type="component" value="Chromosome"/>
</dbReference>
<dbReference type="GO" id="GO:1990904">
    <property type="term" value="C:ribonucleoprotein complex"/>
    <property type="evidence" value="ECO:0007669"/>
    <property type="project" value="UniProtKB-KW"/>
</dbReference>
<dbReference type="GO" id="GO:0005840">
    <property type="term" value="C:ribosome"/>
    <property type="evidence" value="ECO:0007669"/>
    <property type="project" value="UniProtKB-KW"/>
</dbReference>
<dbReference type="GO" id="GO:0019843">
    <property type="term" value="F:rRNA binding"/>
    <property type="evidence" value="ECO:0007669"/>
    <property type="project" value="UniProtKB-UniRule"/>
</dbReference>
<dbReference type="GO" id="GO:0003735">
    <property type="term" value="F:structural constituent of ribosome"/>
    <property type="evidence" value="ECO:0007669"/>
    <property type="project" value="InterPro"/>
</dbReference>
<dbReference type="GO" id="GO:0006412">
    <property type="term" value="P:translation"/>
    <property type="evidence" value="ECO:0007669"/>
    <property type="project" value="UniProtKB-UniRule"/>
</dbReference>
<dbReference type="FunFam" id="3.40.5.10:FF:000002">
    <property type="entry name" value="50S ribosomal protein L9"/>
    <property type="match status" value="1"/>
</dbReference>
<dbReference type="Gene3D" id="3.10.430.100">
    <property type="entry name" value="Ribosomal protein L9, C-terminal domain"/>
    <property type="match status" value="1"/>
</dbReference>
<dbReference type="Gene3D" id="3.40.5.10">
    <property type="entry name" value="Ribosomal protein L9, N-terminal domain"/>
    <property type="match status" value="1"/>
</dbReference>
<dbReference type="HAMAP" id="MF_00503">
    <property type="entry name" value="Ribosomal_bL9"/>
    <property type="match status" value="1"/>
</dbReference>
<dbReference type="InterPro" id="IPR000244">
    <property type="entry name" value="Ribosomal_bL9"/>
</dbReference>
<dbReference type="InterPro" id="IPR009027">
    <property type="entry name" value="Ribosomal_bL9/RNase_H1_N"/>
</dbReference>
<dbReference type="InterPro" id="IPR020594">
    <property type="entry name" value="Ribosomal_bL9_bac/chp"/>
</dbReference>
<dbReference type="InterPro" id="IPR020069">
    <property type="entry name" value="Ribosomal_bL9_C"/>
</dbReference>
<dbReference type="InterPro" id="IPR036791">
    <property type="entry name" value="Ribosomal_bL9_C_sf"/>
</dbReference>
<dbReference type="InterPro" id="IPR020070">
    <property type="entry name" value="Ribosomal_bL9_N"/>
</dbReference>
<dbReference type="InterPro" id="IPR036935">
    <property type="entry name" value="Ribosomal_bL9_N_sf"/>
</dbReference>
<dbReference type="NCBIfam" id="TIGR00158">
    <property type="entry name" value="L9"/>
    <property type="match status" value="1"/>
</dbReference>
<dbReference type="PANTHER" id="PTHR21368">
    <property type="entry name" value="50S RIBOSOMAL PROTEIN L9"/>
    <property type="match status" value="1"/>
</dbReference>
<dbReference type="Pfam" id="PF03948">
    <property type="entry name" value="Ribosomal_L9_C"/>
    <property type="match status" value="1"/>
</dbReference>
<dbReference type="Pfam" id="PF01281">
    <property type="entry name" value="Ribosomal_L9_N"/>
    <property type="match status" value="1"/>
</dbReference>
<dbReference type="SUPFAM" id="SSF55658">
    <property type="entry name" value="L9 N-domain-like"/>
    <property type="match status" value="1"/>
</dbReference>
<dbReference type="SUPFAM" id="SSF55653">
    <property type="entry name" value="Ribosomal protein L9 C-domain"/>
    <property type="match status" value="1"/>
</dbReference>
<dbReference type="PROSITE" id="PS00651">
    <property type="entry name" value="RIBOSOMAL_L9"/>
    <property type="match status" value="1"/>
</dbReference>
<sequence length="151" mass="16752">MKVVLLKDIPGIGKTGDMKEVKDGYARNFLIPRGLAKMATEGEIKRIRNEKILKEHKEDLTKKKSEEILKTLQKQIHKVPAKVGGGGKLFGALTSTNLSEILSKNSGVEIDKKWINMDKPLKETGLYDIEMRLPGGVRGTIKVEIVGEEKG</sequence>
<protein>
    <recommendedName>
        <fullName evidence="1">Large ribosomal subunit protein bL9</fullName>
    </recommendedName>
    <alternativeName>
        <fullName evidence="2">50S ribosomal protein L9</fullName>
    </alternativeName>
</protein>
<accession>A8F7L9</accession>
<proteinExistence type="inferred from homology"/>
<gene>
    <name evidence="1" type="primary">rplI</name>
    <name type="ordered locus">Tlet_1599</name>
</gene>